<accession>P22197</accession>
<accession>O65582</accession>
<accession>Q53YH0</accession>
<comment type="function">
    <text evidence="4">Plays a key role in glycolysis and gluconeogenesis.</text>
</comment>
<comment type="catalytic activity">
    <reaction evidence="4">
        <text>beta-D-fructose 1,6-bisphosphate = D-glyceraldehyde 3-phosphate + dihydroxyacetone phosphate</text>
        <dbReference type="Rhea" id="RHEA:14729"/>
        <dbReference type="ChEBI" id="CHEBI:32966"/>
        <dbReference type="ChEBI" id="CHEBI:57642"/>
        <dbReference type="ChEBI" id="CHEBI:59776"/>
        <dbReference type="EC" id="4.1.2.13"/>
    </reaction>
</comment>
<comment type="pathway">
    <text evidence="8">Carbohydrate degradation; glycolysis; D-glyceraldehyde 3-phosphate and glycerone phosphate from D-glucose: step 4/4.</text>
</comment>
<comment type="subunit">
    <text evidence="2">Homotetramer.</text>
</comment>
<comment type="subcellular location">
    <subcellularLocation>
        <location evidence="4">Cytoplasm</location>
        <location evidence="4">Cytosol</location>
    </subcellularLocation>
</comment>
<comment type="tissue specificity">
    <text evidence="6">Highly expressed in flowers, and at lower levels in rosettes leaves and cauline leaves.</text>
</comment>
<comment type="induction">
    <text evidence="5 6">Down-regulated by cadmium (PubMed:16797112). Induced by glucose and sucrose (PubMed:22561114). Induced by drought stress (PubMed:22561114).</text>
</comment>
<comment type="PTM">
    <text evidence="4">S-glutathionylated at Cys-68 and Cys-173.</text>
</comment>
<comment type="PTM">
    <text evidence="4">S-nitrosylated at Cys-173.</text>
</comment>
<comment type="similarity">
    <text evidence="8">Belongs to the class I fructose-bisphosphate aldolase family.</text>
</comment>
<evidence type="ECO:0000250" key="1">
    <source>
        <dbReference type="UniProtKB" id="P00883"/>
    </source>
</evidence>
<evidence type="ECO:0000250" key="2">
    <source>
        <dbReference type="UniProtKB" id="Q944G9"/>
    </source>
</evidence>
<evidence type="ECO:0000250" key="3">
    <source>
        <dbReference type="UniProtKB" id="Q9LF98"/>
    </source>
</evidence>
<evidence type="ECO:0000250" key="4">
    <source>
        <dbReference type="UniProtKB" id="Q9SJQ9"/>
    </source>
</evidence>
<evidence type="ECO:0000269" key="5">
    <source>
    </source>
</evidence>
<evidence type="ECO:0000269" key="6">
    <source>
    </source>
</evidence>
<evidence type="ECO:0000303" key="7">
    <source>
    </source>
</evidence>
<evidence type="ECO:0000305" key="8"/>
<reference key="1">
    <citation type="journal article" date="1990" name="Plant Mol. Biol.">
        <title>Cloning and sequencing of the Arabidopsis aldolase gene.</title>
        <authorList>
            <person name="Chopra S."/>
            <person name="Dolferus R."/>
            <person name="Jacobs M."/>
        </authorList>
    </citation>
    <scope>NUCLEOTIDE SEQUENCE [GENOMIC DNA]</scope>
    <source>
        <strain>cv. Columbia</strain>
    </source>
</reference>
<reference key="2">
    <citation type="journal article" date="1999" name="Nature">
        <title>Sequence and analysis of chromosome 4 of the plant Arabidopsis thaliana.</title>
        <authorList>
            <person name="Mayer K.F.X."/>
            <person name="Schueller C."/>
            <person name="Wambutt R."/>
            <person name="Murphy G."/>
            <person name="Volckaert G."/>
            <person name="Pohl T."/>
            <person name="Duesterhoeft A."/>
            <person name="Stiekema W."/>
            <person name="Entian K.-D."/>
            <person name="Terryn N."/>
            <person name="Harris B."/>
            <person name="Ansorge W."/>
            <person name="Brandt P."/>
            <person name="Grivell L.A."/>
            <person name="Rieger M."/>
            <person name="Weichselgartner M."/>
            <person name="de Simone V."/>
            <person name="Obermaier B."/>
            <person name="Mache R."/>
            <person name="Mueller M."/>
            <person name="Kreis M."/>
            <person name="Delseny M."/>
            <person name="Puigdomenech P."/>
            <person name="Watson M."/>
            <person name="Schmidtheini T."/>
            <person name="Reichert B."/>
            <person name="Portetelle D."/>
            <person name="Perez-Alonso M."/>
            <person name="Boutry M."/>
            <person name="Bancroft I."/>
            <person name="Vos P."/>
            <person name="Hoheisel J."/>
            <person name="Zimmermann W."/>
            <person name="Wedler H."/>
            <person name="Ridley P."/>
            <person name="Langham S.-A."/>
            <person name="McCullagh B."/>
            <person name="Bilham L."/>
            <person name="Robben J."/>
            <person name="van der Schueren J."/>
            <person name="Grymonprez B."/>
            <person name="Chuang Y.-J."/>
            <person name="Vandenbussche F."/>
            <person name="Braeken M."/>
            <person name="Weltjens I."/>
            <person name="Voet M."/>
            <person name="Bastiaens I."/>
            <person name="Aert R."/>
            <person name="Defoor E."/>
            <person name="Weitzenegger T."/>
            <person name="Bothe G."/>
            <person name="Ramsperger U."/>
            <person name="Hilbert H."/>
            <person name="Braun M."/>
            <person name="Holzer E."/>
            <person name="Brandt A."/>
            <person name="Peters S."/>
            <person name="van Staveren M."/>
            <person name="Dirkse W."/>
            <person name="Mooijman P."/>
            <person name="Klein Lankhorst R."/>
            <person name="Rose M."/>
            <person name="Hauf J."/>
            <person name="Koetter P."/>
            <person name="Berneiser S."/>
            <person name="Hempel S."/>
            <person name="Feldpausch M."/>
            <person name="Lamberth S."/>
            <person name="Van den Daele H."/>
            <person name="De Keyser A."/>
            <person name="Buysshaert C."/>
            <person name="Gielen J."/>
            <person name="Villarroel R."/>
            <person name="De Clercq R."/>
            <person name="van Montagu M."/>
            <person name="Rogers J."/>
            <person name="Cronin A."/>
            <person name="Quail M.A."/>
            <person name="Bray-Allen S."/>
            <person name="Clark L."/>
            <person name="Doggett J."/>
            <person name="Hall S."/>
            <person name="Kay M."/>
            <person name="Lennard N."/>
            <person name="McLay K."/>
            <person name="Mayes R."/>
            <person name="Pettett A."/>
            <person name="Rajandream M.A."/>
            <person name="Lyne M."/>
            <person name="Benes V."/>
            <person name="Rechmann S."/>
            <person name="Borkova D."/>
            <person name="Bloecker H."/>
            <person name="Scharfe M."/>
            <person name="Grimm M."/>
            <person name="Loehnert T.-H."/>
            <person name="Dose S."/>
            <person name="de Haan M."/>
            <person name="Maarse A.C."/>
            <person name="Schaefer M."/>
            <person name="Mueller-Auer S."/>
            <person name="Gabel C."/>
            <person name="Fuchs M."/>
            <person name="Fartmann B."/>
            <person name="Granderath K."/>
            <person name="Dauner D."/>
            <person name="Herzl A."/>
            <person name="Neumann S."/>
            <person name="Argiriou A."/>
            <person name="Vitale D."/>
            <person name="Liguori R."/>
            <person name="Piravandi E."/>
            <person name="Massenet O."/>
            <person name="Quigley F."/>
            <person name="Clabauld G."/>
            <person name="Muendlein A."/>
            <person name="Felber R."/>
            <person name="Schnabl S."/>
            <person name="Hiller R."/>
            <person name="Schmidt W."/>
            <person name="Lecharny A."/>
            <person name="Aubourg S."/>
            <person name="Chefdor F."/>
            <person name="Cooke R."/>
            <person name="Berger C."/>
            <person name="Monfort A."/>
            <person name="Casacuberta E."/>
            <person name="Gibbons T."/>
            <person name="Weber N."/>
            <person name="Vandenbol M."/>
            <person name="Bargues M."/>
            <person name="Terol J."/>
            <person name="Torres A."/>
            <person name="Perez-Perez A."/>
            <person name="Purnelle B."/>
            <person name="Bent E."/>
            <person name="Johnson S."/>
            <person name="Tacon D."/>
            <person name="Jesse T."/>
            <person name="Heijnen L."/>
            <person name="Schwarz S."/>
            <person name="Scholler P."/>
            <person name="Heber S."/>
            <person name="Francs P."/>
            <person name="Bielke C."/>
            <person name="Frishman D."/>
            <person name="Haase D."/>
            <person name="Lemcke K."/>
            <person name="Mewes H.-W."/>
            <person name="Stocker S."/>
            <person name="Zaccaria P."/>
            <person name="Bevan M."/>
            <person name="Wilson R.K."/>
            <person name="de la Bastide M."/>
            <person name="Habermann K."/>
            <person name="Parnell L."/>
            <person name="Dedhia N."/>
            <person name="Gnoj L."/>
            <person name="Schutz K."/>
            <person name="Huang E."/>
            <person name="Spiegel L."/>
            <person name="Sekhon M."/>
            <person name="Murray J."/>
            <person name="Sheet P."/>
            <person name="Cordes M."/>
            <person name="Abu-Threideh J."/>
            <person name="Stoneking T."/>
            <person name="Kalicki J."/>
            <person name="Graves T."/>
            <person name="Harmon G."/>
            <person name="Edwards J."/>
            <person name="Latreille P."/>
            <person name="Courtney L."/>
            <person name="Cloud J."/>
            <person name="Abbott A."/>
            <person name="Scott K."/>
            <person name="Johnson D."/>
            <person name="Minx P."/>
            <person name="Bentley D."/>
            <person name="Fulton B."/>
            <person name="Miller N."/>
            <person name="Greco T."/>
            <person name="Kemp K."/>
            <person name="Kramer J."/>
            <person name="Fulton L."/>
            <person name="Mardis E."/>
            <person name="Dante M."/>
            <person name="Pepin K."/>
            <person name="Hillier L.W."/>
            <person name="Nelson J."/>
            <person name="Spieth J."/>
            <person name="Ryan E."/>
            <person name="Andrews S."/>
            <person name="Geisel C."/>
            <person name="Layman D."/>
            <person name="Du H."/>
            <person name="Ali J."/>
            <person name="Berghoff A."/>
            <person name="Jones K."/>
            <person name="Drone K."/>
            <person name="Cotton M."/>
            <person name="Joshu C."/>
            <person name="Antonoiu B."/>
            <person name="Zidanic M."/>
            <person name="Strong C."/>
            <person name="Sun H."/>
            <person name="Lamar B."/>
            <person name="Yordan C."/>
            <person name="Ma P."/>
            <person name="Zhong J."/>
            <person name="Preston R."/>
            <person name="Vil D."/>
            <person name="Shekher M."/>
            <person name="Matero A."/>
            <person name="Shah R."/>
            <person name="Swaby I.K."/>
            <person name="O'Shaughnessy A."/>
            <person name="Rodriguez M."/>
            <person name="Hoffman J."/>
            <person name="Till S."/>
            <person name="Granat S."/>
            <person name="Shohdy N."/>
            <person name="Hasegawa A."/>
            <person name="Hameed A."/>
            <person name="Lodhi M."/>
            <person name="Johnson A."/>
            <person name="Chen E."/>
            <person name="Marra M.A."/>
            <person name="Martienssen R."/>
            <person name="McCombie W.R."/>
        </authorList>
    </citation>
    <scope>NUCLEOTIDE SEQUENCE [LARGE SCALE GENOMIC DNA]</scope>
    <source>
        <strain>cv. Columbia</strain>
    </source>
</reference>
<reference key="3">
    <citation type="journal article" date="2017" name="Plant J.">
        <title>Araport11: a complete reannotation of the Arabidopsis thaliana reference genome.</title>
        <authorList>
            <person name="Cheng C.Y."/>
            <person name="Krishnakumar V."/>
            <person name="Chan A.P."/>
            <person name="Thibaud-Nissen F."/>
            <person name="Schobel S."/>
            <person name="Town C.D."/>
        </authorList>
    </citation>
    <scope>GENOME REANNOTATION</scope>
    <source>
        <strain>cv. Columbia</strain>
    </source>
</reference>
<reference key="4">
    <citation type="journal article" date="2003" name="Science">
        <title>Empirical analysis of transcriptional activity in the Arabidopsis genome.</title>
        <authorList>
            <person name="Yamada K."/>
            <person name="Lim J."/>
            <person name="Dale J.M."/>
            <person name="Chen H."/>
            <person name="Shinn P."/>
            <person name="Palm C.J."/>
            <person name="Southwick A.M."/>
            <person name="Wu H.C."/>
            <person name="Kim C.J."/>
            <person name="Nguyen M."/>
            <person name="Pham P.K."/>
            <person name="Cheuk R.F."/>
            <person name="Karlin-Newmann G."/>
            <person name="Liu S.X."/>
            <person name="Lam B."/>
            <person name="Sakano H."/>
            <person name="Wu T."/>
            <person name="Yu G."/>
            <person name="Miranda M."/>
            <person name="Quach H.L."/>
            <person name="Tripp M."/>
            <person name="Chang C.H."/>
            <person name="Lee J.M."/>
            <person name="Toriumi M.J."/>
            <person name="Chan M.M."/>
            <person name="Tang C.C."/>
            <person name="Onodera C.S."/>
            <person name="Deng J.M."/>
            <person name="Akiyama K."/>
            <person name="Ansari Y."/>
            <person name="Arakawa T."/>
            <person name="Banh J."/>
            <person name="Banno F."/>
            <person name="Bowser L."/>
            <person name="Brooks S.Y."/>
            <person name="Carninci P."/>
            <person name="Chao Q."/>
            <person name="Choy N."/>
            <person name="Enju A."/>
            <person name="Goldsmith A.D."/>
            <person name="Gurjal M."/>
            <person name="Hansen N.F."/>
            <person name="Hayashizaki Y."/>
            <person name="Johnson-Hopson C."/>
            <person name="Hsuan V.W."/>
            <person name="Iida K."/>
            <person name="Karnes M."/>
            <person name="Khan S."/>
            <person name="Koesema E."/>
            <person name="Ishida J."/>
            <person name="Jiang P.X."/>
            <person name="Jones T."/>
            <person name="Kawai J."/>
            <person name="Kamiya A."/>
            <person name="Meyers C."/>
            <person name="Nakajima M."/>
            <person name="Narusaka M."/>
            <person name="Seki M."/>
            <person name="Sakurai T."/>
            <person name="Satou M."/>
            <person name="Tamse R."/>
            <person name="Vaysberg M."/>
            <person name="Wallender E.K."/>
            <person name="Wong C."/>
            <person name="Yamamura Y."/>
            <person name="Yuan S."/>
            <person name="Shinozaki K."/>
            <person name="Davis R.W."/>
            <person name="Theologis A."/>
            <person name="Ecker J.R."/>
        </authorList>
    </citation>
    <scope>NUCLEOTIDE SEQUENCE [LARGE SCALE MRNA]</scope>
    <source>
        <strain>cv. Columbia</strain>
    </source>
</reference>
<reference key="5">
    <citation type="journal article" date="2006" name="Biochimie">
        <title>Genome-wide transcriptome profiling of the early cadmium response of Arabidopsis roots and shoots.</title>
        <authorList>
            <person name="Herbette S."/>
            <person name="Taconnat L."/>
            <person name="Hugouvieux V."/>
            <person name="Piette L."/>
            <person name="Magniette M.L."/>
            <person name="Cuine S."/>
            <person name="Auroy P."/>
            <person name="Richaud P."/>
            <person name="Forestier C."/>
            <person name="Bourguignon J."/>
            <person name="Renou J.P."/>
            <person name="Vavasseur A."/>
            <person name="Leonhardt N."/>
        </authorList>
    </citation>
    <scope>INDUCTION</scope>
</reference>
<reference key="6">
    <citation type="journal article" date="2012" name="Gene">
        <title>Identification and characterization of fructose 1,6-bisphosphate aldolase genes in Arabidopsis reveal a gene family with diverse responses to abiotic stresses.</title>
        <authorList>
            <person name="Lu W."/>
            <person name="Tang X."/>
            <person name="Huo Y."/>
            <person name="Xu R."/>
            <person name="Qi S."/>
            <person name="Huang J."/>
            <person name="Zheng C."/>
            <person name="Wu C.A."/>
        </authorList>
    </citation>
    <scope>TISSUE SPECIFICITY</scope>
    <scope>INDUCTION</scope>
    <scope>GENE FAMILY</scope>
    <scope>NOMENCLATURE</scope>
</reference>
<feature type="initiator methionine" description="Removed" evidence="3">
    <location>
        <position position="1"/>
    </location>
</feature>
<feature type="chain" id="PRO_0000216919" description="Fructose-bisphosphate aldolase 7, cytosolic">
    <location>
        <begin position="2"/>
        <end position="358"/>
    </location>
</feature>
<feature type="active site" description="Proton acceptor" evidence="1">
    <location>
        <position position="183"/>
    </location>
</feature>
<feature type="active site" description="Schiff-base intermediate with dihydroxyacetone-P" evidence="1">
    <location>
        <position position="225"/>
    </location>
</feature>
<feature type="binding site" evidence="1">
    <location>
        <position position="52"/>
    </location>
    <ligand>
        <name>substrate</name>
    </ligand>
</feature>
<feature type="binding site" evidence="1">
    <location>
        <position position="142"/>
    </location>
    <ligand>
        <name>substrate</name>
    </ligand>
</feature>
<feature type="binding site" evidence="1">
    <location>
        <begin position="266"/>
        <end position="268"/>
    </location>
    <ligand>
        <name>substrate</name>
    </ligand>
</feature>
<feature type="site" description="Necessary for preference for fructose 1,6-bisphosphate over fructose 1-phosphate" evidence="1">
    <location>
        <position position="358"/>
    </location>
</feature>
<feature type="modified residue" description="N-acetylserine" evidence="3">
    <location>
        <position position="2"/>
    </location>
</feature>
<feature type="modified residue" description="S-glutathionyl cysteine; transient" evidence="4">
    <location>
        <position position="68"/>
    </location>
</feature>
<feature type="modified residue" description="S-glutathionyl cysteine; transient; alternate" evidence="4">
    <location>
        <position position="173"/>
    </location>
</feature>
<feature type="modified residue" description="S-nitrosocysteine; transient; alternate" evidence="4">
    <location>
        <position position="173"/>
    </location>
</feature>
<feature type="sequence conflict" description="In Ref. 1; CAA37226." evidence="8" ref="1">
    <original>A</original>
    <variation>G</variation>
    <location>
        <position position="138"/>
    </location>
</feature>
<proteinExistence type="evidence at transcript level"/>
<protein>
    <recommendedName>
        <fullName evidence="8">Fructose-bisphosphate aldolase 7, cytosolic</fullName>
        <shortName evidence="7">AtFBA7</shortName>
        <ecNumber evidence="8">4.1.2.13</ecNumber>
    </recommendedName>
</protein>
<dbReference type="EC" id="4.1.2.13" evidence="8"/>
<dbReference type="EMBL" id="X53058">
    <property type="protein sequence ID" value="CAA37226.1"/>
    <property type="molecule type" value="Genomic_DNA"/>
</dbReference>
<dbReference type="EMBL" id="AL022223">
    <property type="protein sequence ID" value="CAA18218.1"/>
    <property type="molecule type" value="Genomic_DNA"/>
</dbReference>
<dbReference type="EMBL" id="AL161565">
    <property type="protein sequence ID" value="CAB79507.1"/>
    <property type="molecule type" value="Genomic_DNA"/>
</dbReference>
<dbReference type="EMBL" id="CP002687">
    <property type="protein sequence ID" value="AEE85213.1"/>
    <property type="molecule type" value="Genomic_DNA"/>
</dbReference>
<dbReference type="EMBL" id="BT001927">
    <property type="protein sequence ID" value="AAN71926.1"/>
    <property type="molecule type" value="mRNA"/>
</dbReference>
<dbReference type="PIR" id="D85307">
    <property type="entry name" value="D85307"/>
</dbReference>
<dbReference type="PIR" id="S11958">
    <property type="entry name" value="ADMU"/>
</dbReference>
<dbReference type="RefSeq" id="NP_194382.1">
    <property type="nucleotide sequence ID" value="NM_118785.4"/>
</dbReference>
<dbReference type="SMR" id="P22197"/>
<dbReference type="FunCoup" id="P22197">
    <property type="interactions" value="2209"/>
</dbReference>
<dbReference type="STRING" id="3702.P22197"/>
<dbReference type="GlyGen" id="P22197">
    <property type="glycosylation" value="1 site"/>
</dbReference>
<dbReference type="PaxDb" id="3702-AT4G26520.1"/>
<dbReference type="ProteomicsDB" id="244403"/>
<dbReference type="EnsemblPlants" id="AT4G26520.1">
    <property type="protein sequence ID" value="AT4G26520.1"/>
    <property type="gene ID" value="AT4G26520"/>
</dbReference>
<dbReference type="GeneID" id="828758"/>
<dbReference type="Gramene" id="AT4G26520.1">
    <property type="protein sequence ID" value="AT4G26520.1"/>
    <property type="gene ID" value="AT4G26520"/>
</dbReference>
<dbReference type="KEGG" id="ath:AT4G26520"/>
<dbReference type="Araport" id="AT4G26520"/>
<dbReference type="TAIR" id="AT4G26520">
    <property type="gene designation" value="FBA7"/>
</dbReference>
<dbReference type="eggNOG" id="KOG1557">
    <property type="taxonomic scope" value="Eukaryota"/>
</dbReference>
<dbReference type="HOGENOM" id="CLU_031243_0_2_1"/>
<dbReference type="InParanoid" id="P22197"/>
<dbReference type="PhylomeDB" id="P22197"/>
<dbReference type="BioCyc" id="ARA:AT4G26520-MONOMER"/>
<dbReference type="UniPathway" id="UPA00109">
    <property type="reaction ID" value="UER00183"/>
</dbReference>
<dbReference type="PRO" id="PR:P22197"/>
<dbReference type="Proteomes" id="UP000006548">
    <property type="component" value="Chromosome 4"/>
</dbReference>
<dbReference type="ExpressionAtlas" id="P22197">
    <property type="expression patterns" value="baseline and differential"/>
</dbReference>
<dbReference type="GO" id="GO:0005829">
    <property type="term" value="C:cytosol"/>
    <property type="evidence" value="ECO:0007669"/>
    <property type="project" value="UniProtKB-SubCell"/>
</dbReference>
<dbReference type="GO" id="GO:0004332">
    <property type="term" value="F:fructose-bisphosphate aldolase activity"/>
    <property type="evidence" value="ECO:0000250"/>
    <property type="project" value="UniProtKB"/>
</dbReference>
<dbReference type="GO" id="GO:0006094">
    <property type="term" value="P:gluconeogenesis"/>
    <property type="evidence" value="ECO:0000250"/>
    <property type="project" value="UniProtKB"/>
</dbReference>
<dbReference type="GO" id="GO:0006096">
    <property type="term" value="P:glycolytic process"/>
    <property type="evidence" value="ECO:0000250"/>
    <property type="project" value="UniProtKB"/>
</dbReference>
<dbReference type="GO" id="GO:0001666">
    <property type="term" value="P:response to hypoxia"/>
    <property type="evidence" value="ECO:0000270"/>
    <property type="project" value="TAIR"/>
</dbReference>
<dbReference type="CDD" id="cd00948">
    <property type="entry name" value="FBP_aldolase_I_a"/>
    <property type="match status" value="1"/>
</dbReference>
<dbReference type="FunFam" id="3.20.20.70:FF:000068">
    <property type="entry name" value="Fructose-bisphosphate aldolase"/>
    <property type="match status" value="1"/>
</dbReference>
<dbReference type="Gene3D" id="3.20.20.70">
    <property type="entry name" value="Aldolase class I"/>
    <property type="match status" value="1"/>
</dbReference>
<dbReference type="InterPro" id="IPR029768">
    <property type="entry name" value="Aldolase_I_AS"/>
</dbReference>
<dbReference type="InterPro" id="IPR013785">
    <property type="entry name" value="Aldolase_TIM"/>
</dbReference>
<dbReference type="InterPro" id="IPR000741">
    <property type="entry name" value="FBA_I"/>
</dbReference>
<dbReference type="NCBIfam" id="NF033379">
    <property type="entry name" value="FrucBisAld_I"/>
    <property type="match status" value="1"/>
</dbReference>
<dbReference type="PANTHER" id="PTHR11627">
    <property type="entry name" value="FRUCTOSE-BISPHOSPHATE ALDOLASE"/>
    <property type="match status" value="1"/>
</dbReference>
<dbReference type="Pfam" id="PF00274">
    <property type="entry name" value="Glycolytic"/>
    <property type="match status" value="1"/>
</dbReference>
<dbReference type="SUPFAM" id="SSF51569">
    <property type="entry name" value="Aldolase"/>
    <property type="match status" value="1"/>
</dbReference>
<dbReference type="PROSITE" id="PS00158">
    <property type="entry name" value="ALDOLASE_CLASS_I"/>
    <property type="match status" value="1"/>
</dbReference>
<name>ALFC7_ARATH</name>
<sequence length="358" mass="38810">MSAFVSKYEDELIKTAKYIATPGRGILAADESTETIGKRFAGINVENTESNRQAYRELLFTSPGSYPCLSGVILFEETLYQKTSDGKPFVDLLMENGVIPGIKVDKGLVDLAGTNGETTTQGLDSLGARCQQYYEAGARFAKWRAFFKIGATEPSVLSIQEDARVLARYAIICQENGLVPIVEPEVLTGGSHDIKKCAAVTETVLAAVFKALNYHHVLLEGTLLKPNMVTPGSDSPKVAPELIAEYTVTALRRTVPPAIPGIVFLSGIQREEQATLNLNAMNKLDVLKPWTLTFSFGGALQQSAIKAWAGKPENVAKAQAKFLTRCKANKDATLGKYTGWASGDSAAFENLVVIGYRY</sequence>
<gene>
    <name evidence="7" type="primary">FBA7</name>
    <name type="ordered locus">At4g26520</name>
    <name type="ORF">M3E9.50</name>
</gene>
<keyword id="KW-0007">Acetylation</keyword>
<keyword id="KW-0963">Cytoplasm</keyword>
<keyword id="KW-0318">Glutathionylation</keyword>
<keyword id="KW-0324">Glycolysis</keyword>
<keyword id="KW-0456">Lyase</keyword>
<keyword id="KW-1185">Reference proteome</keyword>
<keyword id="KW-0702">S-nitrosylation</keyword>
<keyword id="KW-0704">Schiff base</keyword>
<organism>
    <name type="scientific">Arabidopsis thaliana</name>
    <name type="common">Mouse-ear cress</name>
    <dbReference type="NCBI Taxonomy" id="3702"/>
    <lineage>
        <taxon>Eukaryota</taxon>
        <taxon>Viridiplantae</taxon>
        <taxon>Streptophyta</taxon>
        <taxon>Embryophyta</taxon>
        <taxon>Tracheophyta</taxon>
        <taxon>Spermatophyta</taxon>
        <taxon>Magnoliopsida</taxon>
        <taxon>eudicotyledons</taxon>
        <taxon>Gunneridae</taxon>
        <taxon>Pentapetalae</taxon>
        <taxon>rosids</taxon>
        <taxon>malvids</taxon>
        <taxon>Brassicales</taxon>
        <taxon>Brassicaceae</taxon>
        <taxon>Camelineae</taxon>
        <taxon>Arabidopsis</taxon>
    </lineage>
</organism>